<organism>
    <name type="scientific">Synechocystis sp. (strain ATCC 27184 / PCC 6803 / Kazusa)</name>
    <dbReference type="NCBI Taxonomy" id="1111708"/>
    <lineage>
        <taxon>Bacteria</taxon>
        <taxon>Bacillati</taxon>
        <taxon>Cyanobacteriota</taxon>
        <taxon>Cyanophyceae</taxon>
        <taxon>Synechococcales</taxon>
        <taxon>Merismopediaceae</taxon>
        <taxon>Synechocystis</taxon>
    </lineage>
</organism>
<feature type="chain" id="PRO_0000178658" description="Uncharacterized protein sll0036">
    <location>
        <begin position="1"/>
        <end position="433"/>
    </location>
</feature>
<feature type="domain" description="MGS-like" evidence="2">
    <location>
        <begin position="1"/>
        <end position="145"/>
    </location>
</feature>
<feature type="domain" description="DAGKc">
    <location>
        <begin position="127"/>
        <end position="262"/>
    </location>
</feature>
<feature type="region of interest" description="Methylglyoxal synthase">
    <location>
        <begin position="1"/>
        <end position="126"/>
    </location>
</feature>
<feature type="active site" evidence="1">
    <location>
        <position position="62"/>
    </location>
</feature>
<gene>
    <name type="ordered locus">sll0036</name>
</gene>
<protein>
    <recommendedName>
        <fullName>Uncharacterized protein sll0036</fullName>
    </recommendedName>
</protein>
<name>Y036_SYNY3</name>
<reference key="1">
    <citation type="journal article" date="1995" name="DNA Res.">
        <title>Sequence analysis of the genome of the unicellular cyanobacterium Synechocystis sp. strain PCC6803. I. Sequence features in the 1 Mb region from map positions 64% to 92% of the genome.</title>
        <authorList>
            <person name="Kaneko T."/>
            <person name="Tanaka A."/>
            <person name="Sato S."/>
            <person name="Kotani H."/>
            <person name="Sazuka T."/>
            <person name="Miyajima N."/>
            <person name="Sugiura M."/>
            <person name="Tabata S."/>
        </authorList>
    </citation>
    <scope>NUCLEOTIDE SEQUENCE [LARGE SCALE GENOMIC DNA]</scope>
    <source>
        <strain>ATCC 27184 / PCC 6803 / N-1</strain>
    </source>
</reference>
<reference key="2">
    <citation type="journal article" date="1996" name="DNA Res.">
        <title>Sequence analysis of the genome of the unicellular cyanobacterium Synechocystis sp. strain PCC6803. II. Sequence determination of the entire genome and assignment of potential protein-coding regions.</title>
        <authorList>
            <person name="Kaneko T."/>
            <person name="Sato S."/>
            <person name="Kotani H."/>
            <person name="Tanaka A."/>
            <person name="Asamizu E."/>
            <person name="Nakamura Y."/>
            <person name="Miyajima N."/>
            <person name="Hirosawa M."/>
            <person name="Sugiura M."/>
            <person name="Sasamoto S."/>
            <person name="Kimura T."/>
            <person name="Hosouchi T."/>
            <person name="Matsuno A."/>
            <person name="Muraki A."/>
            <person name="Nakazaki N."/>
            <person name="Naruo K."/>
            <person name="Okumura S."/>
            <person name="Shimpo S."/>
            <person name="Takeuchi C."/>
            <person name="Wada T."/>
            <person name="Watanabe A."/>
            <person name="Yamada M."/>
            <person name="Yasuda M."/>
            <person name="Tabata S."/>
        </authorList>
    </citation>
    <scope>NUCLEOTIDE SEQUENCE [LARGE SCALE GENOMIC DNA]</scope>
    <source>
        <strain>ATCC 27184 / PCC 6803 / Kazusa</strain>
    </source>
</reference>
<keyword id="KW-1185">Reference proteome</keyword>
<evidence type="ECO:0000250" key="1"/>
<evidence type="ECO:0000255" key="2">
    <source>
        <dbReference type="PROSITE-ProRule" id="PRU01202"/>
    </source>
</evidence>
<evidence type="ECO:0000305" key="3"/>
<dbReference type="EMBL" id="BA000022">
    <property type="protein sequence ID" value="BAA10795.1"/>
    <property type="molecule type" value="Genomic_DNA"/>
</dbReference>
<dbReference type="PIR" id="S75948">
    <property type="entry name" value="S75948"/>
</dbReference>
<dbReference type="SMR" id="Q55452"/>
<dbReference type="FunCoup" id="Q55452">
    <property type="interactions" value="327"/>
</dbReference>
<dbReference type="STRING" id="1148.gene:10500299"/>
<dbReference type="PaxDb" id="1148-1001308"/>
<dbReference type="EnsemblBacteria" id="BAA10795">
    <property type="protein sequence ID" value="BAA10795"/>
    <property type="gene ID" value="BAA10795"/>
</dbReference>
<dbReference type="KEGG" id="syn:sll0036"/>
<dbReference type="eggNOG" id="COG1597">
    <property type="taxonomic scope" value="Bacteria"/>
</dbReference>
<dbReference type="eggNOG" id="COG1803">
    <property type="taxonomic scope" value="Bacteria"/>
</dbReference>
<dbReference type="InParanoid" id="Q55452"/>
<dbReference type="PhylomeDB" id="Q55452"/>
<dbReference type="Proteomes" id="UP000001425">
    <property type="component" value="Chromosome"/>
</dbReference>
<dbReference type="GO" id="GO:0005829">
    <property type="term" value="C:cytosol"/>
    <property type="evidence" value="ECO:0000318"/>
    <property type="project" value="GO_Central"/>
</dbReference>
<dbReference type="GO" id="GO:0005524">
    <property type="term" value="F:ATP binding"/>
    <property type="evidence" value="ECO:0007669"/>
    <property type="project" value="InterPro"/>
</dbReference>
<dbReference type="GO" id="GO:0016301">
    <property type="term" value="F:kinase activity"/>
    <property type="evidence" value="ECO:0007669"/>
    <property type="project" value="InterPro"/>
</dbReference>
<dbReference type="GO" id="GO:0008929">
    <property type="term" value="F:methylglyoxal synthase activity"/>
    <property type="evidence" value="ECO:0000318"/>
    <property type="project" value="GO_Central"/>
</dbReference>
<dbReference type="GO" id="GO:0019242">
    <property type="term" value="P:methylglyoxal biosynthetic process"/>
    <property type="evidence" value="ECO:0000318"/>
    <property type="project" value="GO_Central"/>
</dbReference>
<dbReference type="GO" id="GO:0008654">
    <property type="term" value="P:phospholipid biosynthetic process"/>
    <property type="evidence" value="ECO:0007669"/>
    <property type="project" value="InterPro"/>
</dbReference>
<dbReference type="CDD" id="cd01422">
    <property type="entry name" value="MGS"/>
    <property type="match status" value="1"/>
</dbReference>
<dbReference type="Gene3D" id="2.60.200.40">
    <property type="match status" value="1"/>
</dbReference>
<dbReference type="Gene3D" id="3.40.50.1380">
    <property type="entry name" value="Methylglyoxal synthase-like domain"/>
    <property type="match status" value="1"/>
</dbReference>
<dbReference type="Gene3D" id="3.40.50.10330">
    <property type="entry name" value="Probable inorganic polyphosphate/atp-NAD kinase, domain 1"/>
    <property type="match status" value="1"/>
</dbReference>
<dbReference type="HAMAP" id="MF_00549">
    <property type="entry name" value="Methylglyoxal_synth"/>
    <property type="match status" value="1"/>
</dbReference>
<dbReference type="InterPro" id="IPR017438">
    <property type="entry name" value="ATP-NAD_kinase_N"/>
</dbReference>
<dbReference type="InterPro" id="IPR005218">
    <property type="entry name" value="Diacylglycerol/lipid_kinase"/>
</dbReference>
<dbReference type="InterPro" id="IPR001206">
    <property type="entry name" value="Diacylglycerol_kinase_cat_dom"/>
</dbReference>
<dbReference type="InterPro" id="IPR004363">
    <property type="entry name" value="Methylgl_synth"/>
</dbReference>
<dbReference type="InterPro" id="IPR018148">
    <property type="entry name" value="Methylglyoxal_synth_AS"/>
</dbReference>
<dbReference type="InterPro" id="IPR011607">
    <property type="entry name" value="MGS-like_dom"/>
</dbReference>
<dbReference type="InterPro" id="IPR036914">
    <property type="entry name" value="MGS-like_dom_sf"/>
</dbReference>
<dbReference type="InterPro" id="IPR016064">
    <property type="entry name" value="NAD/diacylglycerol_kinase_sf"/>
</dbReference>
<dbReference type="InterPro" id="IPR045540">
    <property type="entry name" value="YegS/DAGK_C"/>
</dbReference>
<dbReference type="NCBIfam" id="TIGR00160">
    <property type="entry name" value="MGSA"/>
    <property type="match status" value="1"/>
</dbReference>
<dbReference type="NCBIfam" id="NF002033">
    <property type="entry name" value="PRK00861.1"/>
    <property type="match status" value="1"/>
</dbReference>
<dbReference type="NCBIfam" id="NF003559">
    <property type="entry name" value="PRK05234.1"/>
    <property type="match status" value="1"/>
</dbReference>
<dbReference type="NCBIfam" id="TIGR00147">
    <property type="entry name" value="YegS/Rv2252/BmrU family lipid kinase"/>
    <property type="match status" value="1"/>
</dbReference>
<dbReference type="PANTHER" id="PTHR30492">
    <property type="entry name" value="METHYLGLYOXAL SYNTHASE"/>
    <property type="match status" value="1"/>
</dbReference>
<dbReference type="PANTHER" id="PTHR30492:SF0">
    <property type="entry name" value="METHYLGLYOXAL SYNTHASE"/>
    <property type="match status" value="1"/>
</dbReference>
<dbReference type="Pfam" id="PF00781">
    <property type="entry name" value="DAGK_cat"/>
    <property type="match status" value="1"/>
</dbReference>
<dbReference type="Pfam" id="PF02142">
    <property type="entry name" value="MGS"/>
    <property type="match status" value="1"/>
</dbReference>
<dbReference type="Pfam" id="PF19279">
    <property type="entry name" value="YegS_C"/>
    <property type="match status" value="1"/>
</dbReference>
<dbReference type="SMART" id="SM00046">
    <property type="entry name" value="DAGKc"/>
    <property type="match status" value="1"/>
</dbReference>
<dbReference type="SMART" id="SM00851">
    <property type="entry name" value="MGS"/>
    <property type="match status" value="1"/>
</dbReference>
<dbReference type="SUPFAM" id="SSF52335">
    <property type="entry name" value="Methylglyoxal synthase-like"/>
    <property type="match status" value="1"/>
</dbReference>
<dbReference type="SUPFAM" id="SSF111331">
    <property type="entry name" value="NAD kinase/diacylglycerol kinase-like"/>
    <property type="match status" value="1"/>
</dbReference>
<dbReference type="PROSITE" id="PS50146">
    <property type="entry name" value="DAGK"/>
    <property type="match status" value="1"/>
</dbReference>
<dbReference type="PROSITE" id="PS01335">
    <property type="entry name" value="METHYLGLYOXAL_SYNTH"/>
    <property type="match status" value="1"/>
</dbReference>
<dbReference type="PROSITE" id="PS51855">
    <property type="entry name" value="MGS"/>
    <property type="match status" value="1"/>
</dbReference>
<proteinExistence type="inferred from homology"/>
<accession>Q55452</accession>
<sequence length="433" mass="45909">MAAHIALIAHDNKKDALVNFVQQHKSLFSRYDLIATGQTGELVRNKTGLAVDTVFSGPLGGDTQIATQIIDGTIAAVIFLIDPLYAQPHEPDIRTLLRLCEVYNVPLAINLATAKAVIKLLGKTKTGHLIFNPVAGQGNVERELDLIKEHLQSEINLKITFTSAEVNVTDQAKEIVKRIKQANEQSDGEGDSFIIASGGDGTVSGVAAALVNTGIPLGIIPRGTANAFSVALGIPTQIPGACQTINRGITKVVDTALCNDIPMLLLAGVGFEAEMVEKADRELKNNLGVMAYIFAGIQQAREQELFEAHIEIDSETTTMEASAITIANAAPPTSVFAQGAGQVSFTDGLLDITVASSQTALQGLQVVTNLFTSALSKNPSDNENVLHLYGESIKVTTSPPQKIVVDGEIIGTTPVEVKCLPKSLNIFAPVENS</sequence>
<comment type="similarity">
    <text evidence="3">In the N-terminal section; belongs to the methylglyoxal synthase family.</text>
</comment>